<keyword id="KW-1003">Cell membrane</keyword>
<keyword id="KW-0184">Conjugation</keyword>
<keyword id="KW-0472">Membrane</keyword>
<keyword id="KW-0614">Plasmid</keyword>
<keyword id="KW-0812">Transmembrane</keyword>
<keyword id="KW-1133">Transmembrane helix</keyword>
<proteinExistence type="predicted"/>
<gene>
    <name type="primary">trbA</name>
    <name type="ordered locus">ECOK12F092</name>
</gene>
<evidence type="ECO:0000255" key="1"/>
<accession>P18034</accession>
<organism>
    <name type="scientific">Escherichia coli (strain K12)</name>
    <dbReference type="NCBI Taxonomy" id="83333"/>
    <lineage>
        <taxon>Bacteria</taxon>
        <taxon>Pseudomonadati</taxon>
        <taxon>Pseudomonadota</taxon>
        <taxon>Gammaproteobacteria</taxon>
        <taxon>Enterobacterales</taxon>
        <taxon>Enterobacteriaceae</taxon>
        <taxon>Escherichia</taxon>
    </lineage>
</organism>
<reference key="1">
    <citation type="journal article" date="1989" name="J. Bacteriol.">
        <title>Nucleotide sequence of traQ and adjacent loci in the Escherichia coli K-12 F-plasmid transfer operon.</title>
        <authorList>
            <person name="Wu J.H."/>
            <person name="Ippen-Ihler K."/>
        </authorList>
    </citation>
    <scope>NUCLEOTIDE SEQUENCE [GENOMIC DNA]</scope>
    <source>
        <strain>K12</strain>
    </source>
</reference>
<reference key="2">
    <citation type="journal article" date="1994" name="Microbiol. Rev.">
        <title>Analysis of the sequence and gene products of the transfer region of the F sex factor.</title>
        <authorList>
            <person name="Frost L.S."/>
            <person name="Ippen-Ihler K."/>
            <person name="Skurray R.A."/>
        </authorList>
    </citation>
    <scope>NUCLEOTIDE SEQUENCE [GENOMIC DNA]</scope>
</reference>
<reference key="3">
    <citation type="submission" date="2000-04" db="EMBL/GenBank/DDBJ databases">
        <title>Complete nucleotide sequence of the F plasmid: its implications for organization and diversification of plasmid genomes.</title>
        <authorList>
            <person name="Shimizu H."/>
            <person name="Saitoh Y."/>
            <person name="Suda Y."/>
            <person name="Uehara K."/>
            <person name="Sampei G."/>
            <person name="Mizobuchi K."/>
        </authorList>
    </citation>
    <scope>NUCLEOTIDE SEQUENCE [LARGE SCALE GENOMIC DNA]</scope>
    <source>
        <strain>K12 / CR63</strain>
    </source>
</reference>
<sequence length="115" mass="12945">MSEDYLKMFTGVVLLIFVIIAGYFFSERNDRKMFLLSSLVFLVVNIACLYVLTASLWFLCGAIMSQGAALVVSIVAAALPDVTSFDRFRRIFICIMLSSVWSGVMWFFIRGLMTG</sequence>
<name>TRBA_ECOLI</name>
<feature type="chain" id="PRO_0000068487" description="Protein TrbA">
    <location>
        <begin position="1"/>
        <end position="115"/>
    </location>
</feature>
<feature type="transmembrane region" description="Helical" evidence="1">
    <location>
        <begin position="5"/>
        <end position="25"/>
    </location>
</feature>
<feature type="transmembrane region" description="Helical" evidence="1">
    <location>
        <begin position="39"/>
        <end position="59"/>
    </location>
</feature>
<feature type="transmembrane region" description="Helical" evidence="1">
    <location>
        <begin position="60"/>
        <end position="80"/>
    </location>
</feature>
<feature type="transmembrane region" description="Helical" evidence="1">
    <location>
        <begin position="91"/>
        <end position="111"/>
    </location>
</feature>
<protein>
    <recommendedName>
        <fullName>Protein TrbA</fullName>
    </recommendedName>
</protein>
<dbReference type="EMBL" id="M20787">
    <property type="protein sequence ID" value="AAC63065.1"/>
    <property type="molecule type" value="Genomic_DNA"/>
</dbReference>
<dbReference type="EMBL" id="U01159">
    <property type="protein sequence ID" value="AAC44203.1"/>
    <property type="molecule type" value="Genomic_DNA"/>
</dbReference>
<dbReference type="EMBL" id="AP001918">
    <property type="protein sequence ID" value="BAA97962.1"/>
    <property type="molecule type" value="Genomic_DNA"/>
</dbReference>
<dbReference type="PIR" id="A32238">
    <property type="entry name" value="BVECTA"/>
</dbReference>
<dbReference type="RefSeq" id="NP_061471.1">
    <property type="nucleotide sequence ID" value="NC_002483.1"/>
</dbReference>
<dbReference type="RefSeq" id="NP_862937.1">
    <property type="nucleotide sequence ID" value="NC_004998.1"/>
</dbReference>
<dbReference type="RefSeq" id="WP_001287913.1">
    <property type="nucleotide sequence ID" value="NZ_JACEFS010000047.1"/>
</dbReference>
<dbReference type="RefSeq" id="YP_009068332.1">
    <property type="nucleotide sequence ID" value="NC_025139.1"/>
</dbReference>
<dbReference type="RefSeq" id="YP_009070597.1">
    <property type="nucleotide sequence ID" value="NC_025175.1"/>
</dbReference>
<dbReference type="DIP" id="DIP-28112N"/>
<dbReference type="KEGG" id="ecoc:C3026_24560"/>
<dbReference type="PATRIC" id="fig|83333.107.peg.620"/>
<dbReference type="OrthoDB" id="9982383at2"/>
<dbReference type="PRO" id="PR:P18034"/>
<dbReference type="GO" id="GO:0005886">
    <property type="term" value="C:plasma membrane"/>
    <property type="evidence" value="ECO:0007669"/>
    <property type="project" value="UniProtKB-SubCell"/>
</dbReference>
<dbReference type="InterPro" id="IPR016385">
    <property type="entry name" value="Conjugal_tfr_repressor_TrbA"/>
</dbReference>
<dbReference type="NCBIfam" id="NF010266">
    <property type="entry name" value="PRK13712.1"/>
    <property type="match status" value="1"/>
</dbReference>
<dbReference type="PIRSF" id="PIRSF003269">
    <property type="entry name" value="TrbA"/>
    <property type="match status" value="1"/>
</dbReference>
<geneLocation type="plasmid">
    <name>F</name>
</geneLocation>
<comment type="subcellular location">
    <subcellularLocation>
        <location>Cell membrane</location>
        <topology>Multi-pass membrane protein</topology>
    </subcellularLocation>
</comment>